<geneLocation type="chloroplast"/>
<sequence>MERINTTFYKTKVIPQLQQKYSYSNVHQIPKLRSIHLNRCLGAVSQKIFQKSSEEIAMISGQRPKITYAKKAIAGFQIRKGMPIGMTVTLRRERMYDFLTKFIHLILPRLKDFRGLNPTSFDGNGNYHMGLPDQLAFPEIDYDQIDQYRGMDISIITTAKTDEEAKFLLEALGMRFQ</sequence>
<evidence type="ECO:0000250" key="1"/>
<evidence type="ECO:0000305" key="2"/>
<keyword id="KW-0150">Chloroplast</keyword>
<keyword id="KW-0934">Plastid</keyword>
<keyword id="KW-1185">Reference proteome</keyword>
<keyword id="KW-0687">Ribonucleoprotein</keyword>
<keyword id="KW-0689">Ribosomal protein</keyword>
<keyword id="KW-0694">RNA-binding</keyword>
<keyword id="KW-0699">rRNA-binding</keyword>
<reference key="1">
    <citation type="journal article" date="2003" name="DNA Res.">
        <title>Complete sequence and analysis of the plastid genome of the unicellular red alga Cyanidioschyzon merolae.</title>
        <authorList>
            <person name="Ohta N."/>
            <person name="Matsuzaki M."/>
            <person name="Misumi O."/>
            <person name="Miyagishima S.-Y."/>
            <person name="Nozaki H."/>
            <person name="Tanaka K."/>
            <person name="Shin-i T."/>
            <person name="Kohara Y."/>
            <person name="Kuroiwa T."/>
        </authorList>
    </citation>
    <scope>NUCLEOTIDE SEQUENCE [LARGE SCALE GENOMIC DNA]</scope>
    <source>
        <strain>NIES-3377 / 10D</strain>
    </source>
</reference>
<comment type="function">
    <text evidence="1">Binds 5S rRNA, forms part of the central protuberance of the 50S subunit.</text>
</comment>
<comment type="subunit">
    <text evidence="1">Part of the 50S ribosomal subunit; contacts the 5S rRNA.</text>
</comment>
<comment type="subcellular location">
    <subcellularLocation>
        <location>Plastid</location>
        <location>Chloroplast</location>
    </subcellularLocation>
</comment>
<comment type="similarity">
    <text evidence="2">Belongs to the universal ribosomal protein uL5 family.</text>
</comment>
<organism>
    <name type="scientific">Cyanidioschyzon merolae (strain NIES-3377 / 10D)</name>
    <name type="common">Unicellular red alga</name>
    <dbReference type="NCBI Taxonomy" id="280699"/>
    <lineage>
        <taxon>Eukaryota</taxon>
        <taxon>Rhodophyta</taxon>
        <taxon>Bangiophyceae</taxon>
        <taxon>Cyanidiales</taxon>
        <taxon>Cyanidiaceae</taxon>
        <taxon>Cyanidioschyzon</taxon>
    </lineage>
</organism>
<gene>
    <name type="primary">rpl5</name>
</gene>
<name>RK5_CYAM1</name>
<accession>Q85FV1</accession>
<proteinExistence type="inferred from homology"/>
<protein>
    <recommendedName>
        <fullName evidence="2">Large ribosomal subunit protein uL5c</fullName>
    </recommendedName>
    <alternativeName>
        <fullName>50S ribosomal protein L5, chloroplastic</fullName>
    </alternativeName>
</protein>
<dbReference type="EMBL" id="AB002583">
    <property type="protein sequence ID" value="BAC76243.1"/>
    <property type="molecule type" value="Genomic_DNA"/>
</dbReference>
<dbReference type="RefSeq" id="NP_849081.1">
    <property type="nucleotide sequence ID" value="NC_004799.1"/>
</dbReference>
<dbReference type="SMR" id="Q85FV1"/>
<dbReference type="STRING" id="280699.Q85FV1"/>
<dbReference type="EnsemblPlants" id="CMV176CT">
    <property type="protein sequence ID" value="CMV176CT"/>
    <property type="gene ID" value="CMV176C"/>
</dbReference>
<dbReference type="GeneID" id="844992"/>
<dbReference type="Gramene" id="CMV176CT">
    <property type="protein sequence ID" value="CMV176CT"/>
    <property type="gene ID" value="CMV176C"/>
</dbReference>
<dbReference type="KEGG" id="cme:CymeCp149"/>
<dbReference type="eggNOG" id="KOG0398">
    <property type="taxonomic scope" value="Eukaryota"/>
</dbReference>
<dbReference type="HOGENOM" id="CLU_061015_2_1_1"/>
<dbReference type="Proteomes" id="UP000007014">
    <property type="component" value="Chloroplast"/>
</dbReference>
<dbReference type="GO" id="GO:0009507">
    <property type="term" value="C:chloroplast"/>
    <property type="evidence" value="ECO:0007669"/>
    <property type="project" value="UniProtKB-SubCell"/>
</dbReference>
<dbReference type="GO" id="GO:1990904">
    <property type="term" value="C:ribonucleoprotein complex"/>
    <property type="evidence" value="ECO:0007669"/>
    <property type="project" value="UniProtKB-KW"/>
</dbReference>
<dbReference type="GO" id="GO:0005840">
    <property type="term" value="C:ribosome"/>
    <property type="evidence" value="ECO:0007669"/>
    <property type="project" value="UniProtKB-KW"/>
</dbReference>
<dbReference type="GO" id="GO:0019843">
    <property type="term" value="F:rRNA binding"/>
    <property type="evidence" value="ECO:0007669"/>
    <property type="project" value="UniProtKB-UniRule"/>
</dbReference>
<dbReference type="GO" id="GO:0003735">
    <property type="term" value="F:structural constituent of ribosome"/>
    <property type="evidence" value="ECO:0007669"/>
    <property type="project" value="InterPro"/>
</dbReference>
<dbReference type="GO" id="GO:0006412">
    <property type="term" value="P:translation"/>
    <property type="evidence" value="ECO:0007669"/>
    <property type="project" value="UniProtKB-UniRule"/>
</dbReference>
<dbReference type="FunFam" id="3.30.1440.10:FF:000001">
    <property type="entry name" value="50S ribosomal protein L5"/>
    <property type="match status" value="1"/>
</dbReference>
<dbReference type="Gene3D" id="3.30.1440.10">
    <property type="match status" value="1"/>
</dbReference>
<dbReference type="HAMAP" id="MF_01333_B">
    <property type="entry name" value="Ribosomal_uL5_B"/>
    <property type="match status" value="1"/>
</dbReference>
<dbReference type="InterPro" id="IPR002132">
    <property type="entry name" value="Ribosomal_uL5"/>
</dbReference>
<dbReference type="InterPro" id="IPR020930">
    <property type="entry name" value="Ribosomal_uL5_bac-type"/>
</dbReference>
<dbReference type="InterPro" id="IPR031309">
    <property type="entry name" value="Ribosomal_uL5_C"/>
</dbReference>
<dbReference type="InterPro" id="IPR022803">
    <property type="entry name" value="Ribosomal_uL5_dom_sf"/>
</dbReference>
<dbReference type="InterPro" id="IPR031310">
    <property type="entry name" value="Ribosomal_uL5_N"/>
</dbReference>
<dbReference type="NCBIfam" id="NF000585">
    <property type="entry name" value="PRK00010.1"/>
    <property type="match status" value="1"/>
</dbReference>
<dbReference type="PANTHER" id="PTHR11994">
    <property type="entry name" value="60S RIBOSOMAL PROTEIN L11-RELATED"/>
    <property type="match status" value="1"/>
</dbReference>
<dbReference type="Pfam" id="PF00281">
    <property type="entry name" value="Ribosomal_L5"/>
    <property type="match status" value="1"/>
</dbReference>
<dbReference type="Pfam" id="PF00673">
    <property type="entry name" value="Ribosomal_L5_C"/>
    <property type="match status" value="1"/>
</dbReference>
<dbReference type="PIRSF" id="PIRSF002161">
    <property type="entry name" value="Ribosomal_L5"/>
    <property type="match status" value="1"/>
</dbReference>
<dbReference type="SUPFAM" id="SSF55282">
    <property type="entry name" value="RL5-like"/>
    <property type="match status" value="1"/>
</dbReference>
<feature type="chain" id="PRO_0000125040" description="Large ribosomal subunit protein uL5c">
    <location>
        <begin position="1"/>
        <end position="177"/>
    </location>
</feature>